<comment type="function">
    <text evidence="3">Inactive carboxypeptidase that may play a role in cell wall organization and biogenesis.</text>
</comment>
<comment type="cofactor">
    <cofactor evidence="1">
        <name>Zn(2+)</name>
        <dbReference type="ChEBI" id="CHEBI:29105"/>
    </cofactor>
    <text evidence="1">Binds 1 zinc ion per subunit.</text>
</comment>
<comment type="subcellular location">
    <subcellularLocation>
        <location evidence="3">Vacuole</location>
    </subcellularLocation>
    <subcellularLocation>
        <location evidence="3">Secreted</location>
    </subcellularLocation>
</comment>
<comment type="similarity">
    <text evidence="7">Belongs to the peptidase M14 family.</text>
</comment>
<comment type="caution">
    <text evidence="3">Lacks the conserved Glu residue in position 491 essential for carbopeptidase activity. The mature form lacks catalytic activity towards synthetic peptide substrates.</text>
</comment>
<sequence length="587" mass="66338">MRLLLSVLLLLVASLGLVSAVPAGSSITPPPPIEPIQLLSSRSTDSRRPWIRLRDRVIESIWGISKDSSHHRSVKDSPRSRSPSRSLTRYGSDVVLRFHLRNAEEAEALAEATDVLFLDVWASTSEFVDIRLAQEVIPSLLGLLPDSLRTAYTPLIDNLAEMIYATYPTRRPVGFEDHPGFIPSVRQSTQFGDLFFRDYQPLSVIVPWMRLMASMFSSHVQMINVGVSYEGREIPALRLGTRGQTAEPYPRKTIVVVGGSHAREWISTSTVIYTAYSLITRYGKSHEVTRLLEDFDWVFVPTLNPDGYVYTWESDRLWRKNRQPTSLHFCPGIDLDRAWEFQWDGERTRSNPCSENYAGTEPFEGMEAHQLAQWALNETQTNNAKIVGFLDLHSYSQQILYPFSFSCSSVPPTLESLEELGMGLAKVIRLTTHEIYDVTSACEGTITADDQARNRNSPPKKPIFPTGGSSGGSALDWFYHQLHTDYAYQIKLRDRGSYGFLLPSEYIVPTGKEIFNVVLTFGKFLVGDLAHNINLDWDAELQRTEPEEAPASQGDEPAPATQQVLQADVEDEETEWVEKARSEFRRR</sequence>
<gene>
    <name type="primary">ecm14</name>
    <name type="ORF">NFIA_084380</name>
</gene>
<feature type="signal peptide" evidence="4">
    <location>
        <begin position="1"/>
        <end position="20"/>
    </location>
</feature>
<feature type="propeptide" id="PRO_0000453245" evidence="3">
    <location>
        <begin position="21"/>
        <end position="170"/>
    </location>
</feature>
<feature type="chain" id="PRO_0000411185" description="Inactive metallocarboxypeptidase ecm14">
    <location>
        <begin position="171"/>
        <end position="587"/>
    </location>
</feature>
<feature type="domain" description="Peptidase M14" evidence="5">
    <location>
        <begin position="198"/>
        <end position="525"/>
    </location>
</feature>
<feature type="region of interest" description="Disordered" evidence="6">
    <location>
        <begin position="68"/>
        <end position="87"/>
    </location>
</feature>
<feature type="region of interest" description="Disordered" evidence="6">
    <location>
        <begin position="542"/>
        <end position="573"/>
    </location>
</feature>
<feature type="compositionally biased region" description="Basic and acidic residues" evidence="6">
    <location>
        <begin position="68"/>
        <end position="79"/>
    </location>
</feature>
<feature type="binding site" evidence="1">
    <location>
        <begin position="261"/>
        <end position="264"/>
    </location>
    <ligand>
        <name>substrate</name>
    </ligand>
</feature>
<feature type="binding site" evidence="5">
    <location>
        <position position="261"/>
    </location>
    <ligand>
        <name>Zn(2+)</name>
        <dbReference type="ChEBI" id="CHEBI:29105"/>
        <note>catalytic</note>
    </ligand>
</feature>
<feature type="binding site" evidence="5">
    <location>
        <position position="264"/>
    </location>
    <ligand>
        <name>Zn(2+)</name>
        <dbReference type="ChEBI" id="CHEBI:29105"/>
        <note>catalytic</note>
    </ligand>
</feature>
<feature type="binding site" evidence="1">
    <location>
        <position position="319"/>
    </location>
    <ligand>
        <name>substrate</name>
    </ligand>
</feature>
<feature type="binding site" evidence="1">
    <location>
        <begin position="336"/>
        <end position="337"/>
    </location>
    <ligand>
        <name>substrate</name>
    </ligand>
</feature>
<feature type="binding site" evidence="5">
    <location>
        <position position="393"/>
    </location>
    <ligand>
        <name>Zn(2+)</name>
        <dbReference type="ChEBI" id="CHEBI:29105"/>
        <note>catalytic</note>
    </ligand>
</feature>
<feature type="binding site" evidence="1">
    <location>
        <begin position="394"/>
        <end position="395"/>
    </location>
    <ligand>
        <name>substrate</name>
    </ligand>
</feature>
<feature type="glycosylation site" description="N-linked (GlcNAc...) asparagine" evidence="4">
    <location>
        <position position="377"/>
    </location>
</feature>
<feature type="disulfide bond" evidence="2">
    <location>
        <begin position="330"/>
        <end position="353"/>
    </location>
</feature>
<organism>
    <name type="scientific">Neosartorya fischeri (strain ATCC 1020 / DSM 3700 / CBS 544.65 / FGSC A1164 / JCM 1740 / NRRL 181 / WB 181)</name>
    <name type="common">Aspergillus fischerianus</name>
    <dbReference type="NCBI Taxonomy" id="331117"/>
    <lineage>
        <taxon>Eukaryota</taxon>
        <taxon>Fungi</taxon>
        <taxon>Dikarya</taxon>
        <taxon>Ascomycota</taxon>
        <taxon>Pezizomycotina</taxon>
        <taxon>Eurotiomycetes</taxon>
        <taxon>Eurotiomycetidae</taxon>
        <taxon>Eurotiales</taxon>
        <taxon>Aspergillaceae</taxon>
        <taxon>Aspergillus</taxon>
        <taxon>Aspergillus subgen. Fumigati</taxon>
    </lineage>
</organism>
<proteinExistence type="inferred from homology"/>
<dbReference type="EMBL" id="DS027696">
    <property type="protein sequence ID" value="EAW18486.1"/>
    <property type="molecule type" value="Genomic_DNA"/>
</dbReference>
<dbReference type="RefSeq" id="XP_001260383.1">
    <property type="nucleotide sequence ID" value="XM_001260382.1"/>
</dbReference>
<dbReference type="SMR" id="A1DGH9"/>
<dbReference type="STRING" id="331117.A1DGH9"/>
<dbReference type="GlyCosmos" id="A1DGH9">
    <property type="glycosylation" value="1 site, No reported glycans"/>
</dbReference>
<dbReference type="EnsemblFungi" id="EAW18486">
    <property type="protein sequence ID" value="EAW18486"/>
    <property type="gene ID" value="NFIA_084380"/>
</dbReference>
<dbReference type="GeneID" id="4586941"/>
<dbReference type="KEGG" id="nfi:NFIA_084380"/>
<dbReference type="VEuPathDB" id="FungiDB:NFIA_084380"/>
<dbReference type="eggNOG" id="KOG2650">
    <property type="taxonomic scope" value="Eukaryota"/>
</dbReference>
<dbReference type="HOGENOM" id="CLU_019326_1_0_1"/>
<dbReference type="OMA" id="WFYHQLH"/>
<dbReference type="OrthoDB" id="3626597at2759"/>
<dbReference type="Proteomes" id="UP000006702">
    <property type="component" value="Unassembled WGS sequence"/>
</dbReference>
<dbReference type="GO" id="GO:0005576">
    <property type="term" value="C:extracellular region"/>
    <property type="evidence" value="ECO:0007669"/>
    <property type="project" value="UniProtKB-SubCell"/>
</dbReference>
<dbReference type="GO" id="GO:0005773">
    <property type="term" value="C:vacuole"/>
    <property type="evidence" value="ECO:0007669"/>
    <property type="project" value="UniProtKB-SubCell"/>
</dbReference>
<dbReference type="GO" id="GO:0008270">
    <property type="term" value="F:zinc ion binding"/>
    <property type="evidence" value="ECO:0007669"/>
    <property type="project" value="InterPro"/>
</dbReference>
<dbReference type="GO" id="GO:0071555">
    <property type="term" value="P:cell wall organization"/>
    <property type="evidence" value="ECO:0007669"/>
    <property type="project" value="UniProtKB-KW"/>
</dbReference>
<dbReference type="GO" id="GO:0006508">
    <property type="term" value="P:proteolysis"/>
    <property type="evidence" value="ECO:0007669"/>
    <property type="project" value="InterPro"/>
</dbReference>
<dbReference type="CDD" id="cd03860">
    <property type="entry name" value="M14_CP_A-B_like"/>
    <property type="match status" value="1"/>
</dbReference>
<dbReference type="FunFam" id="3.40.630.10:FF:000060">
    <property type="entry name" value="Putative metallocarboxypeptidase ecm14"/>
    <property type="match status" value="1"/>
</dbReference>
<dbReference type="Gene3D" id="3.30.70.340">
    <property type="entry name" value="Metallocarboxypeptidase-like"/>
    <property type="match status" value="1"/>
</dbReference>
<dbReference type="Gene3D" id="3.40.630.10">
    <property type="entry name" value="Zn peptidases"/>
    <property type="match status" value="1"/>
</dbReference>
<dbReference type="InterPro" id="IPR036990">
    <property type="entry name" value="M14A-like_propep"/>
</dbReference>
<dbReference type="InterPro" id="IPR000834">
    <property type="entry name" value="Peptidase_M14"/>
</dbReference>
<dbReference type="PANTHER" id="PTHR11705:SF147">
    <property type="entry name" value="INACTIVE METALLOCARBOXYPEPTIDASE ECM14"/>
    <property type="match status" value="1"/>
</dbReference>
<dbReference type="PANTHER" id="PTHR11705">
    <property type="entry name" value="PROTEASE FAMILY M14 CARBOXYPEPTIDASE A,B"/>
    <property type="match status" value="1"/>
</dbReference>
<dbReference type="Pfam" id="PF00246">
    <property type="entry name" value="Peptidase_M14"/>
    <property type="match status" value="1"/>
</dbReference>
<dbReference type="PRINTS" id="PR00765">
    <property type="entry name" value="CRBOXYPTASEA"/>
</dbReference>
<dbReference type="SMART" id="SM00631">
    <property type="entry name" value="Zn_pept"/>
    <property type="match status" value="1"/>
</dbReference>
<dbReference type="SUPFAM" id="SSF54897">
    <property type="entry name" value="Protease propeptides/inhibitors"/>
    <property type="match status" value="1"/>
</dbReference>
<dbReference type="SUPFAM" id="SSF53187">
    <property type="entry name" value="Zn-dependent exopeptidases"/>
    <property type="match status" value="1"/>
</dbReference>
<dbReference type="PROSITE" id="PS00132">
    <property type="entry name" value="CARBOXYPEPT_ZN_1"/>
    <property type="match status" value="1"/>
</dbReference>
<dbReference type="PROSITE" id="PS52035">
    <property type="entry name" value="PEPTIDASE_M14"/>
    <property type="match status" value="1"/>
</dbReference>
<reference key="1">
    <citation type="journal article" date="2008" name="PLoS Genet.">
        <title>Genomic islands in the pathogenic filamentous fungus Aspergillus fumigatus.</title>
        <authorList>
            <person name="Fedorova N.D."/>
            <person name="Khaldi N."/>
            <person name="Joardar V.S."/>
            <person name="Maiti R."/>
            <person name="Amedeo P."/>
            <person name="Anderson M.J."/>
            <person name="Crabtree J."/>
            <person name="Silva J.C."/>
            <person name="Badger J.H."/>
            <person name="Albarraq A."/>
            <person name="Angiuoli S."/>
            <person name="Bussey H."/>
            <person name="Bowyer P."/>
            <person name="Cotty P.J."/>
            <person name="Dyer P.S."/>
            <person name="Egan A."/>
            <person name="Galens K."/>
            <person name="Fraser-Liggett C.M."/>
            <person name="Haas B.J."/>
            <person name="Inman J.M."/>
            <person name="Kent R."/>
            <person name="Lemieux S."/>
            <person name="Malavazi I."/>
            <person name="Orvis J."/>
            <person name="Roemer T."/>
            <person name="Ronning C.M."/>
            <person name="Sundaram J.P."/>
            <person name="Sutton G."/>
            <person name="Turner G."/>
            <person name="Venter J.C."/>
            <person name="White O.R."/>
            <person name="Whitty B.R."/>
            <person name="Youngman P."/>
            <person name="Wolfe K.H."/>
            <person name="Goldman G.H."/>
            <person name="Wortman J.R."/>
            <person name="Jiang B."/>
            <person name="Denning D.W."/>
            <person name="Nierman W.C."/>
        </authorList>
    </citation>
    <scope>NUCLEOTIDE SEQUENCE [LARGE SCALE GENOMIC DNA]</scope>
    <source>
        <strain>ATCC 1020 / DSM 3700 / CBS 544.65 / FGSC A1164 / JCM 1740 / NRRL 181 / WB 181</strain>
    </source>
</reference>
<evidence type="ECO:0000250" key="1">
    <source>
        <dbReference type="UniProtKB" id="P00730"/>
    </source>
</evidence>
<evidence type="ECO:0000250" key="2">
    <source>
        <dbReference type="UniProtKB" id="P15085"/>
    </source>
</evidence>
<evidence type="ECO:0000250" key="3">
    <source>
        <dbReference type="UniProtKB" id="P38836"/>
    </source>
</evidence>
<evidence type="ECO:0000255" key="4"/>
<evidence type="ECO:0000255" key="5">
    <source>
        <dbReference type="PROSITE-ProRule" id="PRU01379"/>
    </source>
</evidence>
<evidence type="ECO:0000256" key="6">
    <source>
        <dbReference type="SAM" id="MobiDB-lite"/>
    </source>
</evidence>
<evidence type="ECO:0000305" key="7"/>
<accession>A1DGH9</accession>
<protein>
    <recommendedName>
        <fullName evidence="7">Inactive metallocarboxypeptidase ecm14</fullName>
    </recommendedName>
</protein>
<name>ECM14_NEOFI</name>
<keyword id="KW-0961">Cell wall biogenesis/degradation</keyword>
<keyword id="KW-1015">Disulfide bond</keyword>
<keyword id="KW-0325">Glycoprotein</keyword>
<keyword id="KW-0479">Metal-binding</keyword>
<keyword id="KW-1185">Reference proteome</keyword>
<keyword id="KW-0964">Secreted</keyword>
<keyword id="KW-0732">Signal</keyword>
<keyword id="KW-0926">Vacuole</keyword>
<keyword id="KW-0862">Zinc</keyword>